<comment type="function">
    <text evidence="1">Negatively regulates transcription of bacterial ribonucleotide reductase nrd genes and operons by binding to NrdR-boxes.</text>
</comment>
<comment type="cofactor">
    <cofactor evidence="1">
        <name>Zn(2+)</name>
        <dbReference type="ChEBI" id="CHEBI:29105"/>
    </cofactor>
    <text evidence="1">Binds 1 zinc ion.</text>
</comment>
<comment type="similarity">
    <text evidence="1">Belongs to the NrdR family.</text>
</comment>
<proteinExistence type="inferred from homology"/>
<gene>
    <name evidence="1" type="primary">nrdR</name>
    <name type="ordered locus">BSUIS_A0800</name>
</gene>
<dbReference type="EMBL" id="CP000911">
    <property type="protein sequence ID" value="ABY37871.1"/>
    <property type="molecule type" value="Genomic_DNA"/>
</dbReference>
<dbReference type="RefSeq" id="WP_002966765.1">
    <property type="nucleotide sequence ID" value="NC_010169.1"/>
</dbReference>
<dbReference type="SMR" id="B0CL91"/>
<dbReference type="GeneID" id="93016844"/>
<dbReference type="KEGG" id="bmt:BSUIS_A0800"/>
<dbReference type="HOGENOM" id="CLU_108412_0_1_5"/>
<dbReference type="Proteomes" id="UP000008545">
    <property type="component" value="Chromosome I"/>
</dbReference>
<dbReference type="GO" id="GO:0005524">
    <property type="term" value="F:ATP binding"/>
    <property type="evidence" value="ECO:0007669"/>
    <property type="project" value="UniProtKB-KW"/>
</dbReference>
<dbReference type="GO" id="GO:0003677">
    <property type="term" value="F:DNA binding"/>
    <property type="evidence" value="ECO:0007669"/>
    <property type="project" value="UniProtKB-KW"/>
</dbReference>
<dbReference type="GO" id="GO:0008270">
    <property type="term" value="F:zinc ion binding"/>
    <property type="evidence" value="ECO:0007669"/>
    <property type="project" value="UniProtKB-UniRule"/>
</dbReference>
<dbReference type="GO" id="GO:0045892">
    <property type="term" value="P:negative regulation of DNA-templated transcription"/>
    <property type="evidence" value="ECO:0007669"/>
    <property type="project" value="UniProtKB-UniRule"/>
</dbReference>
<dbReference type="HAMAP" id="MF_00440">
    <property type="entry name" value="NrdR"/>
    <property type="match status" value="1"/>
</dbReference>
<dbReference type="InterPro" id="IPR005144">
    <property type="entry name" value="ATP-cone_dom"/>
</dbReference>
<dbReference type="InterPro" id="IPR055173">
    <property type="entry name" value="NrdR-like_N"/>
</dbReference>
<dbReference type="InterPro" id="IPR003796">
    <property type="entry name" value="RNR_NrdR-like"/>
</dbReference>
<dbReference type="NCBIfam" id="TIGR00244">
    <property type="entry name" value="transcriptional regulator NrdR"/>
    <property type="match status" value="1"/>
</dbReference>
<dbReference type="PANTHER" id="PTHR30455">
    <property type="entry name" value="TRANSCRIPTIONAL REPRESSOR NRDR"/>
    <property type="match status" value="1"/>
</dbReference>
<dbReference type="PANTHER" id="PTHR30455:SF2">
    <property type="entry name" value="TRANSCRIPTIONAL REPRESSOR NRDR"/>
    <property type="match status" value="1"/>
</dbReference>
<dbReference type="Pfam" id="PF03477">
    <property type="entry name" value="ATP-cone"/>
    <property type="match status" value="1"/>
</dbReference>
<dbReference type="Pfam" id="PF22811">
    <property type="entry name" value="Zn_ribbon_NrdR"/>
    <property type="match status" value="1"/>
</dbReference>
<dbReference type="PROSITE" id="PS51161">
    <property type="entry name" value="ATP_CONE"/>
    <property type="match status" value="1"/>
</dbReference>
<name>NRDR_BRUSI</name>
<evidence type="ECO:0000255" key="1">
    <source>
        <dbReference type="HAMAP-Rule" id="MF_00440"/>
    </source>
</evidence>
<feature type="chain" id="PRO_1000080719" description="Transcriptional repressor NrdR">
    <location>
        <begin position="1"/>
        <end position="158"/>
    </location>
</feature>
<feature type="domain" description="ATP-cone" evidence="1">
    <location>
        <begin position="49"/>
        <end position="139"/>
    </location>
</feature>
<feature type="zinc finger region" evidence="1">
    <location>
        <begin position="3"/>
        <end position="34"/>
    </location>
</feature>
<accession>B0CL91</accession>
<sequence>MRCPYCQSEDTQVKDSRPAEDGAVIRRRRVCSVCGGRFTTFERVQLRDLMVVKKSGRRVPFDRDKLTRSIEVALRKRDVDSERVERAISGIVRQLESAGEAEVTSDEIGRLAMDALKGIDDIAYIRFASVYRNFSKAVDFHNVIDELTVSETGDNLET</sequence>
<reference key="1">
    <citation type="submission" date="2007-12" db="EMBL/GenBank/DDBJ databases">
        <title>Brucella suis ATCC 23445 whole genome shotgun sequencing project.</title>
        <authorList>
            <person name="Setubal J.C."/>
            <person name="Bowns C."/>
            <person name="Boyle S."/>
            <person name="Crasta O.R."/>
            <person name="Czar M.J."/>
            <person name="Dharmanolla C."/>
            <person name="Gillespie J.J."/>
            <person name="Kenyon R.W."/>
            <person name="Lu J."/>
            <person name="Mane S."/>
            <person name="Mohapatra S."/>
            <person name="Nagrani S."/>
            <person name="Purkayastha A."/>
            <person name="Rajasimha H.K."/>
            <person name="Shallom J.M."/>
            <person name="Shallom S."/>
            <person name="Shukla M."/>
            <person name="Snyder E.E."/>
            <person name="Sobral B.W."/>
            <person name="Wattam A.R."/>
            <person name="Will R."/>
            <person name="Williams K."/>
            <person name="Yoo H."/>
            <person name="Bruce D."/>
            <person name="Detter C."/>
            <person name="Munk C."/>
            <person name="Brettin T.S."/>
        </authorList>
    </citation>
    <scope>NUCLEOTIDE SEQUENCE [LARGE SCALE GENOMIC DNA]</scope>
    <source>
        <strain>ATCC 23445 / NCTC 10510</strain>
    </source>
</reference>
<organism>
    <name type="scientific">Brucella suis (strain ATCC 23445 / NCTC 10510)</name>
    <dbReference type="NCBI Taxonomy" id="470137"/>
    <lineage>
        <taxon>Bacteria</taxon>
        <taxon>Pseudomonadati</taxon>
        <taxon>Pseudomonadota</taxon>
        <taxon>Alphaproteobacteria</taxon>
        <taxon>Hyphomicrobiales</taxon>
        <taxon>Brucellaceae</taxon>
        <taxon>Brucella/Ochrobactrum group</taxon>
        <taxon>Brucella</taxon>
    </lineage>
</organism>
<protein>
    <recommendedName>
        <fullName evidence="1">Transcriptional repressor NrdR</fullName>
    </recommendedName>
</protein>
<keyword id="KW-0067">ATP-binding</keyword>
<keyword id="KW-0238">DNA-binding</keyword>
<keyword id="KW-0479">Metal-binding</keyword>
<keyword id="KW-0547">Nucleotide-binding</keyword>
<keyword id="KW-0678">Repressor</keyword>
<keyword id="KW-0804">Transcription</keyword>
<keyword id="KW-0805">Transcription regulation</keyword>
<keyword id="KW-0862">Zinc</keyword>
<keyword id="KW-0863">Zinc-finger</keyword>